<keyword id="KW-0963">Cytoplasm</keyword>
<keyword id="KW-0227">DNA damage</keyword>
<keyword id="KW-0228">DNA excision</keyword>
<keyword id="KW-0234">DNA repair</keyword>
<keyword id="KW-0267">Excision nuclease</keyword>
<keyword id="KW-1185">Reference proteome</keyword>
<keyword id="KW-0742">SOS response</keyword>
<accession>Q1GDL4</accession>
<dbReference type="EMBL" id="CP000377">
    <property type="protein sequence ID" value="ABF65252.1"/>
    <property type="molecule type" value="Genomic_DNA"/>
</dbReference>
<dbReference type="SMR" id="Q1GDL4"/>
<dbReference type="STRING" id="292414.TM1040_2520"/>
<dbReference type="KEGG" id="sit:TM1040_2520"/>
<dbReference type="eggNOG" id="COG0322">
    <property type="taxonomic scope" value="Bacteria"/>
</dbReference>
<dbReference type="HOGENOM" id="CLU_014841_3_0_5"/>
<dbReference type="Proteomes" id="UP000000636">
    <property type="component" value="Chromosome"/>
</dbReference>
<dbReference type="GO" id="GO:0005737">
    <property type="term" value="C:cytoplasm"/>
    <property type="evidence" value="ECO:0007669"/>
    <property type="project" value="UniProtKB-SubCell"/>
</dbReference>
<dbReference type="GO" id="GO:0009380">
    <property type="term" value="C:excinuclease repair complex"/>
    <property type="evidence" value="ECO:0007669"/>
    <property type="project" value="InterPro"/>
</dbReference>
<dbReference type="GO" id="GO:0003677">
    <property type="term" value="F:DNA binding"/>
    <property type="evidence" value="ECO:0007669"/>
    <property type="project" value="UniProtKB-UniRule"/>
</dbReference>
<dbReference type="GO" id="GO:0009381">
    <property type="term" value="F:excinuclease ABC activity"/>
    <property type="evidence" value="ECO:0007669"/>
    <property type="project" value="UniProtKB-UniRule"/>
</dbReference>
<dbReference type="GO" id="GO:0006289">
    <property type="term" value="P:nucleotide-excision repair"/>
    <property type="evidence" value="ECO:0007669"/>
    <property type="project" value="UniProtKB-UniRule"/>
</dbReference>
<dbReference type="GO" id="GO:0009432">
    <property type="term" value="P:SOS response"/>
    <property type="evidence" value="ECO:0007669"/>
    <property type="project" value="UniProtKB-UniRule"/>
</dbReference>
<dbReference type="CDD" id="cd10434">
    <property type="entry name" value="GIY-YIG_UvrC_Cho"/>
    <property type="match status" value="1"/>
</dbReference>
<dbReference type="FunFam" id="3.30.420.340:FF:000001">
    <property type="entry name" value="UvrABC system protein C"/>
    <property type="match status" value="1"/>
</dbReference>
<dbReference type="FunFam" id="3.40.1440.10:FF:000001">
    <property type="entry name" value="UvrABC system protein C"/>
    <property type="match status" value="1"/>
</dbReference>
<dbReference type="Gene3D" id="1.10.150.20">
    <property type="entry name" value="5' to 3' exonuclease, C-terminal subdomain"/>
    <property type="match status" value="1"/>
</dbReference>
<dbReference type="Gene3D" id="3.40.1440.10">
    <property type="entry name" value="GIY-YIG endonuclease"/>
    <property type="match status" value="1"/>
</dbReference>
<dbReference type="Gene3D" id="4.10.860.10">
    <property type="entry name" value="UVR domain"/>
    <property type="match status" value="1"/>
</dbReference>
<dbReference type="Gene3D" id="3.30.420.340">
    <property type="entry name" value="UvrC, RNAse H endonuclease domain"/>
    <property type="match status" value="1"/>
</dbReference>
<dbReference type="HAMAP" id="MF_00203">
    <property type="entry name" value="UvrC"/>
    <property type="match status" value="1"/>
</dbReference>
<dbReference type="InterPro" id="IPR041663">
    <property type="entry name" value="DisA/LigA_HHH"/>
</dbReference>
<dbReference type="InterPro" id="IPR000305">
    <property type="entry name" value="GIY-YIG_endonuc"/>
</dbReference>
<dbReference type="InterPro" id="IPR035901">
    <property type="entry name" value="GIY-YIG_endonuc_sf"/>
</dbReference>
<dbReference type="InterPro" id="IPR047296">
    <property type="entry name" value="GIY-YIG_UvrC_Cho"/>
</dbReference>
<dbReference type="InterPro" id="IPR010994">
    <property type="entry name" value="RuvA_2-like"/>
</dbReference>
<dbReference type="InterPro" id="IPR001943">
    <property type="entry name" value="UVR_dom"/>
</dbReference>
<dbReference type="InterPro" id="IPR036876">
    <property type="entry name" value="UVR_dom_sf"/>
</dbReference>
<dbReference type="InterPro" id="IPR050066">
    <property type="entry name" value="UvrABC_protein_C"/>
</dbReference>
<dbReference type="InterPro" id="IPR004791">
    <property type="entry name" value="UvrC"/>
</dbReference>
<dbReference type="InterPro" id="IPR001162">
    <property type="entry name" value="UvrC_RNase_H_dom"/>
</dbReference>
<dbReference type="InterPro" id="IPR038476">
    <property type="entry name" value="UvrC_RNase_H_dom_sf"/>
</dbReference>
<dbReference type="NCBIfam" id="NF001824">
    <property type="entry name" value="PRK00558.1-5"/>
    <property type="match status" value="1"/>
</dbReference>
<dbReference type="NCBIfam" id="TIGR00194">
    <property type="entry name" value="uvrC"/>
    <property type="match status" value="1"/>
</dbReference>
<dbReference type="PANTHER" id="PTHR30562:SF1">
    <property type="entry name" value="UVRABC SYSTEM PROTEIN C"/>
    <property type="match status" value="1"/>
</dbReference>
<dbReference type="PANTHER" id="PTHR30562">
    <property type="entry name" value="UVRC/OXIDOREDUCTASE"/>
    <property type="match status" value="1"/>
</dbReference>
<dbReference type="Pfam" id="PF01541">
    <property type="entry name" value="GIY-YIG"/>
    <property type="match status" value="1"/>
</dbReference>
<dbReference type="Pfam" id="PF12826">
    <property type="entry name" value="HHH_2"/>
    <property type="match status" value="1"/>
</dbReference>
<dbReference type="Pfam" id="PF02151">
    <property type="entry name" value="UVR"/>
    <property type="match status" value="1"/>
</dbReference>
<dbReference type="Pfam" id="PF22920">
    <property type="entry name" value="UvrC_RNaseH"/>
    <property type="match status" value="1"/>
</dbReference>
<dbReference type="Pfam" id="PF08459">
    <property type="entry name" value="UvrC_RNaseH_dom"/>
    <property type="match status" value="1"/>
</dbReference>
<dbReference type="SMART" id="SM00465">
    <property type="entry name" value="GIYc"/>
    <property type="match status" value="1"/>
</dbReference>
<dbReference type="SUPFAM" id="SSF46600">
    <property type="entry name" value="C-terminal UvrC-binding domain of UvrB"/>
    <property type="match status" value="1"/>
</dbReference>
<dbReference type="SUPFAM" id="SSF82771">
    <property type="entry name" value="GIY-YIG endonuclease"/>
    <property type="match status" value="1"/>
</dbReference>
<dbReference type="SUPFAM" id="SSF47781">
    <property type="entry name" value="RuvA domain 2-like"/>
    <property type="match status" value="1"/>
</dbReference>
<dbReference type="PROSITE" id="PS50164">
    <property type="entry name" value="GIY_YIG"/>
    <property type="match status" value="1"/>
</dbReference>
<dbReference type="PROSITE" id="PS50151">
    <property type="entry name" value="UVR"/>
    <property type="match status" value="1"/>
</dbReference>
<dbReference type="PROSITE" id="PS50165">
    <property type="entry name" value="UVRC"/>
    <property type="match status" value="1"/>
</dbReference>
<organism>
    <name type="scientific">Ruegeria sp. (strain TM1040)</name>
    <name type="common">Silicibacter sp.</name>
    <dbReference type="NCBI Taxonomy" id="292414"/>
    <lineage>
        <taxon>Bacteria</taxon>
        <taxon>Pseudomonadati</taxon>
        <taxon>Pseudomonadota</taxon>
        <taxon>Alphaproteobacteria</taxon>
        <taxon>Rhodobacterales</taxon>
        <taxon>Roseobacteraceae</taxon>
        <taxon>Ruegeria</taxon>
    </lineage>
</organism>
<sequence>MAQNHMSETMNDISAESPDQPEPPRTGYGVIQAYLKTLDSSPGVYRMLDHESRVLYVGKARNLRARVSNYTRPGHTQRIETMISQTSRMMFLTTRTETEALLLEQNLIKQLKPKYNVLLRDDKSFPYIMVSKNHAFPQLKKHRGARKGKASFFGPFASAGAVNRTLNQLQKAFLLRNCTDTMFENRTRPCLQYQIKRCSGPCVGKISQADYADSVRDAERFLAGRSTKIQEELGAEMQAASEAMEYERAAALRDRIKALTQVQSAQGINPRGVSEADIIGLHLENGLACVQVFFIRANQNWGNQDFYPRVAEDMSAAEVMEAFIGQFYDNKDVPRQLILSDDIENADLMAVALSEKARRKVEIVVPQRGEKTELVASAVRNARESLARRMSESATQAKLLRGIADAFGLEAPPNRIEVYDNSHIQGTNAVGGMIVMGPEGFMKNAYRKFNIKDGEVIAGDDFGMMKAVLNRRFSRLLKEDPDRQKGMWPDLLLIDGGAGQVSAVAEIMEEHGVQDIPMVGVAKGVDRDHGKEEFYRPGENAFALQRNDPVLYFIQRMRDEAHRFAIGTHRAKRAKSLVANPLDDIPGVGARRKKALLTHFGSAKAVSRANLSDLKAVDGVSDALAETIYNYFQVR</sequence>
<reference key="1">
    <citation type="submission" date="2006-05" db="EMBL/GenBank/DDBJ databases">
        <title>Complete sequence of chromosome of Silicibacter sp. TM1040.</title>
        <authorList>
            <consortium name="US DOE Joint Genome Institute"/>
            <person name="Copeland A."/>
            <person name="Lucas S."/>
            <person name="Lapidus A."/>
            <person name="Barry K."/>
            <person name="Detter J.C."/>
            <person name="Glavina del Rio T."/>
            <person name="Hammon N."/>
            <person name="Israni S."/>
            <person name="Dalin E."/>
            <person name="Tice H."/>
            <person name="Pitluck S."/>
            <person name="Brettin T."/>
            <person name="Bruce D."/>
            <person name="Han C."/>
            <person name="Tapia R."/>
            <person name="Goodwin L."/>
            <person name="Thompson L.S."/>
            <person name="Gilna P."/>
            <person name="Schmutz J."/>
            <person name="Larimer F."/>
            <person name="Land M."/>
            <person name="Hauser L."/>
            <person name="Kyrpides N."/>
            <person name="Kim E."/>
            <person name="Belas R."/>
            <person name="Moran M.A."/>
            <person name="Buchan A."/>
            <person name="Gonzalez J.M."/>
            <person name="Schell M.A."/>
            <person name="Sun F."/>
            <person name="Richardson P."/>
        </authorList>
    </citation>
    <scope>NUCLEOTIDE SEQUENCE [LARGE SCALE GENOMIC DNA]</scope>
    <source>
        <strain>TM1040</strain>
    </source>
</reference>
<protein>
    <recommendedName>
        <fullName evidence="1">UvrABC system protein C</fullName>
        <shortName evidence="1">Protein UvrC</shortName>
    </recommendedName>
    <alternativeName>
        <fullName evidence="1">Excinuclease ABC subunit C</fullName>
    </alternativeName>
</protein>
<evidence type="ECO:0000255" key="1">
    <source>
        <dbReference type="HAMAP-Rule" id="MF_00203"/>
    </source>
</evidence>
<evidence type="ECO:0000256" key="2">
    <source>
        <dbReference type="SAM" id="MobiDB-lite"/>
    </source>
</evidence>
<comment type="function">
    <text evidence="1">The UvrABC repair system catalyzes the recognition and processing of DNA lesions. UvrC both incises the 5' and 3' sides of the lesion. The N-terminal half is responsible for the 3' incision and the C-terminal half is responsible for the 5' incision.</text>
</comment>
<comment type="subunit">
    <text evidence="1">Interacts with UvrB in an incision complex.</text>
</comment>
<comment type="subcellular location">
    <subcellularLocation>
        <location evidence="1">Cytoplasm</location>
    </subcellularLocation>
</comment>
<comment type="similarity">
    <text evidence="1">Belongs to the UvrC family.</text>
</comment>
<name>UVRC_RUEST</name>
<proteinExistence type="inferred from homology"/>
<gene>
    <name evidence="1" type="primary">uvrC</name>
    <name type="ordered locus">TM1040_2520</name>
</gene>
<feature type="chain" id="PRO_0000264951" description="UvrABC system protein C">
    <location>
        <begin position="1"/>
        <end position="635"/>
    </location>
</feature>
<feature type="domain" description="GIY-YIG" evidence="1">
    <location>
        <begin position="40"/>
        <end position="117"/>
    </location>
</feature>
<feature type="domain" description="UVR" evidence="1">
    <location>
        <begin position="227"/>
        <end position="262"/>
    </location>
</feature>
<feature type="region of interest" description="Disordered" evidence="2">
    <location>
        <begin position="1"/>
        <end position="27"/>
    </location>
</feature>
<feature type="compositionally biased region" description="Polar residues" evidence="2">
    <location>
        <begin position="1"/>
        <end position="14"/>
    </location>
</feature>